<proteinExistence type="inferred from homology"/>
<reference key="1">
    <citation type="journal article" date="2001" name="Nature">
        <title>Genome sequence of Yersinia pestis, the causative agent of plague.</title>
        <authorList>
            <person name="Parkhill J."/>
            <person name="Wren B.W."/>
            <person name="Thomson N.R."/>
            <person name="Titball R.W."/>
            <person name="Holden M.T.G."/>
            <person name="Prentice M.B."/>
            <person name="Sebaihia M."/>
            <person name="James K.D."/>
            <person name="Churcher C.M."/>
            <person name="Mungall K.L."/>
            <person name="Baker S."/>
            <person name="Basham D."/>
            <person name="Bentley S.D."/>
            <person name="Brooks K."/>
            <person name="Cerdeno-Tarraga A.-M."/>
            <person name="Chillingworth T."/>
            <person name="Cronin A."/>
            <person name="Davies R.M."/>
            <person name="Davis P."/>
            <person name="Dougan G."/>
            <person name="Feltwell T."/>
            <person name="Hamlin N."/>
            <person name="Holroyd S."/>
            <person name="Jagels K."/>
            <person name="Karlyshev A.V."/>
            <person name="Leather S."/>
            <person name="Moule S."/>
            <person name="Oyston P.C.F."/>
            <person name="Quail M.A."/>
            <person name="Rutherford K.M."/>
            <person name="Simmonds M."/>
            <person name="Skelton J."/>
            <person name="Stevens K."/>
            <person name="Whitehead S."/>
            <person name="Barrell B.G."/>
        </authorList>
    </citation>
    <scope>NUCLEOTIDE SEQUENCE [LARGE SCALE GENOMIC DNA]</scope>
    <source>
        <strain>CO-92 / Biovar Orientalis</strain>
    </source>
</reference>
<reference key="2">
    <citation type="journal article" date="2002" name="J. Bacteriol.">
        <title>Genome sequence of Yersinia pestis KIM.</title>
        <authorList>
            <person name="Deng W."/>
            <person name="Burland V."/>
            <person name="Plunkett G. III"/>
            <person name="Boutin A."/>
            <person name="Mayhew G.F."/>
            <person name="Liss P."/>
            <person name="Perna N.T."/>
            <person name="Rose D.J."/>
            <person name="Mau B."/>
            <person name="Zhou S."/>
            <person name="Schwartz D.C."/>
            <person name="Fetherston J.D."/>
            <person name="Lindler L.E."/>
            <person name="Brubaker R.R."/>
            <person name="Plano G.V."/>
            <person name="Straley S.C."/>
            <person name="McDonough K.A."/>
            <person name="Nilles M.L."/>
            <person name="Matson J.S."/>
            <person name="Blattner F.R."/>
            <person name="Perry R.D."/>
        </authorList>
    </citation>
    <scope>NUCLEOTIDE SEQUENCE [LARGE SCALE GENOMIC DNA]</scope>
    <source>
        <strain>KIM10+ / Biovar Mediaevalis</strain>
    </source>
</reference>
<reference key="3">
    <citation type="journal article" date="2004" name="DNA Res.">
        <title>Complete genome sequence of Yersinia pestis strain 91001, an isolate avirulent to humans.</title>
        <authorList>
            <person name="Song Y."/>
            <person name="Tong Z."/>
            <person name="Wang J."/>
            <person name="Wang L."/>
            <person name="Guo Z."/>
            <person name="Han Y."/>
            <person name="Zhang J."/>
            <person name="Pei D."/>
            <person name="Zhou D."/>
            <person name="Qin H."/>
            <person name="Pang X."/>
            <person name="Han Y."/>
            <person name="Zhai J."/>
            <person name="Li M."/>
            <person name="Cui B."/>
            <person name="Qi Z."/>
            <person name="Jin L."/>
            <person name="Dai R."/>
            <person name="Chen F."/>
            <person name="Li S."/>
            <person name="Ye C."/>
            <person name="Du Z."/>
            <person name="Lin W."/>
            <person name="Wang J."/>
            <person name="Yu J."/>
            <person name="Yang H."/>
            <person name="Wang J."/>
            <person name="Huang P."/>
            <person name="Yang R."/>
        </authorList>
    </citation>
    <scope>NUCLEOTIDE SEQUENCE [LARGE SCALE GENOMIC DNA]</scope>
    <source>
        <strain>91001 / Biovar Mediaevalis</strain>
    </source>
</reference>
<organism>
    <name type="scientific">Yersinia pestis</name>
    <dbReference type="NCBI Taxonomy" id="632"/>
    <lineage>
        <taxon>Bacteria</taxon>
        <taxon>Pseudomonadati</taxon>
        <taxon>Pseudomonadota</taxon>
        <taxon>Gammaproteobacteria</taxon>
        <taxon>Enterobacterales</taxon>
        <taxon>Yersiniaceae</taxon>
        <taxon>Yersinia</taxon>
    </lineage>
</organism>
<keyword id="KW-0997">Cell inner membrane</keyword>
<keyword id="KW-1003">Cell membrane</keyword>
<keyword id="KW-0342">GTP-binding</keyword>
<keyword id="KW-0378">Hydrolase</keyword>
<keyword id="KW-0472">Membrane</keyword>
<keyword id="KW-0547">Nucleotide-binding</keyword>
<keyword id="KW-0648">Protein biosynthesis</keyword>
<keyword id="KW-1185">Reference proteome</keyword>
<feature type="chain" id="PRO_0000176381" description="Elongation factor 4">
    <location>
        <begin position="1"/>
        <end position="599"/>
    </location>
</feature>
<feature type="domain" description="tr-type G">
    <location>
        <begin position="2"/>
        <end position="184"/>
    </location>
</feature>
<feature type="binding site" evidence="1">
    <location>
        <begin position="14"/>
        <end position="19"/>
    </location>
    <ligand>
        <name>GTP</name>
        <dbReference type="ChEBI" id="CHEBI:37565"/>
    </ligand>
</feature>
<feature type="binding site" evidence="1">
    <location>
        <begin position="131"/>
        <end position="134"/>
    </location>
    <ligand>
        <name>GTP</name>
        <dbReference type="ChEBI" id="CHEBI:37565"/>
    </ligand>
</feature>
<dbReference type="EC" id="3.6.5.n1" evidence="1"/>
<dbReference type="EMBL" id="AL590842">
    <property type="protein sequence ID" value="CAL21335.1"/>
    <property type="molecule type" value="Genomic_DNA"/>
</dbReference>
<dbReference type="EMBL" id="AE009952">
    <property type="protein sequence ID" value="AAM84869.1"/>
    <property type="molecule type" value="Genomic_DNA"/>
</dbReference>
<dbReference type="EMBL" id="AE017042">
    <property type="protein sequence ID" value="AAS62718.1"/>
    <property type="molecule type" value="Genomic_DNA"/>
</dbReference>
<dbReference type="PIR" id="AD0331">
    <property type="entry name" value="AD0331"/>
</dbReference>
<dbReference type="RefSeq" id="WP_002209677.1">
    <property type="nucleotide sequence ID" value="NZ_WUCM01000006.1"/>
</dbReference>
<dbReference type="RefSeq" id="YP_002347663.1">
    <property type="nucleotide sequence ID" value="NC_003143.1"/>
</dbReference>
<dbReference type="SMR" id="Q8ZD74"/>
<dbReference type="PaxDb" id="214092-YPO2715___1"/>
<dbReference type="DNASU" id="1146242"/>
<dbReference type="EnsemblBacteria" id="AAS62718">
    <property type="protein sequence ID" value="AAS62718"/>
    <property type="gene ID" value="YP_2520"/>
</dbReference>
<dbReference type="GeneID" id="57975975"/>
<dbReference type="KEGG" id="ype:YPO2715.1"/>
<dbReference type="KEGG" id="ypk:y1295"/>
<dbReference type="KEGG" id="ypm:YP_2520"/>
<dbReference type="PATRIC" id="fig|214092.21.peg.3157"/>
<dbReference type="eggNOG" id="COG0481">
    <property type="taxonomic scope" value="Bacteria"/>
</dbReference>
<dbReference type="HOGENOM" id="CLU_009995_3_3_6"/>
<dbReference type="OMA" id="QVKCDEN"/>
<dbReference type="OrthoDB" id="9804431at2"/>
<dbReference type="Proteomes" id="UP000000815">
    <property type="component" value="Chromosome"/>
</dbReference>
<dbReference type="Proteomes" id="UP000001019">
    <property type="component" value="Chromosome"/>
</dbReference>
<dbReference type="Proteomes" id="UP000002490">
    <property type="component" value="Chromosome"/>
</dbReference>
<dbReference type="GO" id="GO:0005886">
    <property type="term" value="C:plasma membrane"/>
    <property type="evidence" value="ECO:0007669"/>
    <property type="project" value="UniProtKB-SubCell"/>
</dbReference>
<dbReference type="GO" id="GO:0005525">
    <property type="term" value="F:GTP binding"/>
    <property type="evidence" value="ECO:0007669"/>
    <property type="project" value="UniProtKB-UniRule"/>
</dbReference>
<dbReference type="GO" id="GO:0003924">
    <property type="term" value="F:GTPase activity"/>
    <property type="evidence" value="ECO:0007669"/>
    <property type="project" value="UniProtKB-UniRule"/>
</dbReference>
<dbReference type="GO" id="GO:0097216">
    <property type="term" value="F:guanosine tetraphosphate binding"/>
    <property type="evidence" value="ECO:0007669"/>
    <property type="project" value="UniProtKB-ARBA"/>
</dbReference>
<dbReference type="GO" id="GO:0043022">
    <property type="term" value="F:ribosome binding"/>
    <property type="evidence" value="ECO:0000318"/>
    <property type="project" value="GO_Central"/>
</dbReference>
<dbReference type="GO" id="GO:0003746">
    <property type="term" value="F:translation elongation factor activity"/>
    <property type="evidence" value="ECO:0007669"/>
    <property type="project" value="UniProtKB-UniRule"/>
</dbReference>
<dbReference type="GO" id="GO:0045727">
    <property type="term" value="P:positive regulation of translation"/>
    <property type="evidence" value="ECO:0000318"/>
    <property type="project" value="GO_Central"/>
</dbReference>
<dbReference type="CDD" id="cd03699">
    <property type="entry name" value="EF4_II"/>
    <property type="match status" value="1"/>
</dbReference>
<dbReference type="CDD" id="cd16260">
    <property type="entry name" value="EF4_III"/>
    <property type="match status" value="1"/>
</dbReference>
<dbReference type="CDD" id="cd01890">
    <property type="entry name" value="LepA"/>
    <property type="match status" value="1"/>
</dbReference>
<dbReference type="CDD" id="cd03709">
    <property type="entry name" value="lepA_C"/>
    <property type="match status" value="1"/>
</dbReference>
<dbReference type="FunFam" id="3.30.70.240:FF:000005">
    <property type="entry name" value="Elongation factor 4"/>
    <property type="match status" value="1"/>
</dbReference>
<dbReference type="FunFam" id="3.40.50.300:FF:000078">
    <property type="entry name" value="Elongation factor 4"/>
    <property type="match status" value="1"/>
</dbReference>
<dbReference type="FunFam" id="2.40.30.10:FF:000015">
    <property type="entry name" value="Translation factor GUF1, mitochondrial"/>
    <property type="match status" value="1"/>
</dbReference>
<dbReference type="FunFam" id="3.30.70.2570:FF:000001">
    <property type="entry name" value="Translation factor GUF1, mitochondrial"/>
    <property type="match status" value="1"/>
</dbReference>
<dbReference type="FunFam" id="3.30.70.870:FF:000004">
    <property type="entry name" value="Translation factor GUF1, mitochondrial"/>
    <property type="match status" value="1"/>
</dbReference>
<dbReference type="Gene3D" id="3.30.70.240">
    <property type="match status" value="1"/>
</dbReference>
<dbReference type="Gene3D" id="3.30.70.2570">
    <property type="entry name" value="Elongation factor 4, C-terminal domain"/>
    <property type="match status" value="1"/>
</dbReference>
<dbReference type="Gene3D" id="3.30.70.870">
    <property type="entry name" value="Elongation Factor G (Translational Gtpase), domain 3"/>
    <property type="match status" value="1"/>
</dbReference>
<dbReference type="Gene3D" id="3.40.50.300">
    <property type="entry name" value="P-loop containing nucleotide triphosphate hydrolases"/>
    <property type="match status" value="1"/>
</dbReference>
<dbReference type="Gene3D" id="2.40.30.10">
    <property type="entry name" value="Translation factors"/>
    <property type="match status" value="1"/>
</dbReference>
<dbReference type="HAMAP" id="MF_00071">
    <property type="entry name" value="LepA"/>
    <property type="match status" value="1"/>
</dbReference>
<dbReference type="InterPro" id="IPR006297">
    <property type="entry name" value="EF-4"/>
</dbReference>
<dbReference type="InterPro" id="IPR035647">
    <property type="entry name" value="EFG_III/V"/>
</dbReference>
<dbReference type="InterPro" id="IPR000640">
    <property type="entry name" value="EFG_V-like"/>
</dbReference>
<dbReference type="InterPro" id="IPR004161">
    <property type="entry name" value="EFTu-like_2"/>
</dbReference>
<dbReference type="InterPro" id="IPR031157">
    <property type="entry name" value="G_TR_CS"/>
</dbReference>
<dbReference type="InterPro" id="IPR038363">
    <property type="entry name" value="LepA_C_sf"/>
</dbReference>
<dbReference type="InterPro" id="IPR013842">
    <property type="entry name" value="LepA_CTD"/>
</dbReference>
<dbReference type="InterPro" id="IPR035654">
    <property type="entry name" value="LepA_IV"/>
</dbReference>
<dbReference type="InterPro" id="IPR027417">
    <property type="entry name" value="P-loop_NTPase"/>
</dbReference>
<dbReference type="InterPro" id="IPR005225">
    <property type="entry name" value="Small_GTP-bd"/>
</dbReference>
<dbReference type="InterPro" id="IPR000795">
    <property type="entry name" value="T_Tr_GTP-bd_dom"/>
</dbReference>
<dbReference type="NCBIfam" id="TIGR01393">
    <property type="entry name" value="lepA"/>
    <property type="match status" value="1"/>
</dbReference>
<dbReference type="NCBIfam" id="TIGR00231">
    <property type="entry name" value="small_GTP"/>
    <property type="match status" value="1"/>
</dbReference>
<dbReference type="PANTHER" id="PTHR43512:SF4">
    <property type="entry name" value="TRANSLATION FACTOR GUF1 HOMOLOG, CHLOROPLASTIC"/>
    <property type="match status" value="1"/>
</dbReference>
<dbReference type="PANTHER" id="PTHR43512">
    <property type="entry name" value="TRANSLATION FACTOR GUF1-RELATED"/>
    <property type="match status" value="1"/>
</dbReference>
<dbReference type="Pfam" id="PF00679">
    <property type="entry name" value="EFG_C"/>
    <property type="match status" value="1"/>
</dbReference>
<dbReference type="Pfam" id="PF00009">
    <property type="entry name" value="GTP_EFTU"/>
    <property type="match status" value="1"/>
</dbReference>
<dbReference type="Pfam" id="PF03144">
    <property type="entry name" value="GTP_EFTU_D2"/>
    <property type="match status" value="1"/>
</dbReference>
<dbReference type="Pfam" id="PF06421">
    <property type="entry name" value="LepA_C"/>
    <property type="match status" value="1"/>
</dbReference>
<dbReference type="PRINTS" id="PR00315">
    <property type="entry name" value="ELONGATNFCT"/>
</dbReference>
<dbReference type="SUPFAM" id="SSF54980">
    <property type="entry name" value="EF-G C-terminal domain-like"/>
    <property type="match status" value="2"/>
</dbReference>
<dbReference type="SUPFAM" id="SSF52540">
    <property type="entry name" value="P-loop containing nucleoside triphosphate hydrolases"/>
    <property type="match status" value="1"/>
</dbReference>
<dbReference type="PROSITE" id="PS00301">
    <property type="entry name" value="G_TR_1"/>
    <property type="match status" value="1"/>
</dbReference>
<dbReference type="PROSITE" id="PS51722">
    <property type="entry name" value="G_TR_2"/>
    <property type="match status" value="1"/>
</dbReference>
<name>LEPA_YERPE</name>
<evidence type="ECO:0000255" key="1">
    <source>
        <dbReference type="HAMAP-Rule" id="MF_00071"/>
    </source>
</evidence>
<comment type="function">
    <text evidence="1">Required for accurate and efficient protein synthesis under certain stress conditions. May act as a fidelity factor of the translation reaction, by catalyzing a one-codon backward translocation of tRNAs on improperly translocated ribosomes. Back-translocation proceeds from a post-translocation (POST) complex to a pre-translocation (PRE) complex, thus giving elongation factor G a second chance to translocate the tRNAs correctly. Binds to ribosomes in a GTP-dependent manner.</text>
</comment>
<comment type="catalytic activity">
    <reaction evidence="1">
        <text>GTP + H2O = GDP + phosphate + H(+)</text>
        <dbReference type="Rhea" id="RHEA:19669"/>
        <dbReference type="ChEBI" id="CHEBI:15377"/>
        <dbReference type="ChEBI" id="CHEBI:15378"/>
        <dbReference type="ChEBI" id="CHEBI:37565"/>
        <dbReference type="ChEBI" id="CHEBI:43474"/>
        <dbReference type="ChEBI" id="CHEBI:58189"/>
        <dbReference type="EC" id="3.6.5.n1"/>
    </reaction>
</comment>
<comment type="subcellular location">
    <subcellularLocation>
        <location evidence="1">Cell inner membrane</location>
        <topology evidence="1">Peripheral membrane protein</topology>
        <orientation evidence="1">Cytoplasmic side</orientation>
    </subcellularLocation>
</comment>
<comment type="similarity">
    <text evidence="1">Belongs to the TRAFAC class translation factor GTPase superfamily. Classic translation factor GTPase family. LepA subfamily.</text>
</comment>
<sequence length="599" mass="66709">MKHIRNFSIIAHIDHGKSTLSDRIIQICGGLSEREMAAQVLDSMDLERERGITIKAQSVTLDYHSKDGQTYQLNFIDTPGHVDFSYEVSRSLAACEGALLVVDAGQGVEAQTLANCYTAMEMDLEVVPVLNKIDLPAADPERVAEEIEDIVGIDATDAIRCSAKTGVGVPDVLERLVRDIPAPEGDPNGPLQALIIDSWFDNYLGVVSLIRIKNGSLRKGDKVKVMSTGQSYNADRLGIFTPKRVDRDVLNCGEVGWLVCAIKDILGAPVGDTLTLTRNPAEKSLPGFKKVKPQVYAGLFPISSDDYESFRDALGKLSLNDASLFYEPESSTALGFGFRCGFLGLLHMEIIQERLEREYDLELITTAPTVVYEVITTNQETVYVDSPSKLPALNNIEELREPIAECHMLLPQEYLGNVITLCIEKRGTQTNMVYHGKQVALTYEIPMAEVVLDFFDRLKSTSRGYASLDYNFKRFQTSDMVRVDVLINNERVDALALITHRDNAQYRGRDLVEKMKELIPRQQFDIAIQAAIGNHIIARSTVKQLRKNVLAKCYGGDVSRKKKLLQKQKDGKKRMKQVGNVELPQEAFLAILHVGKDSK</sequence>
<gene>
    <name evidence="1" type="primary">lepA</name>
    <name type="ordered locus">YPO2716</name>
    <name type="ordered locus">y1295</name>
    <name type="ordered locus">YP_2520</name>
</gene>
<protein>
    <recommendedName>
        <fullName evidence="1">Elongation factor 4</fullName>
        <shortName evidence="1">EF-4</shortName>
        <ecNumber evidence="1">3.6.5.n1</ecNumber>
    </recommendedName>
    <alternativeName>
        <fullName evidence="1">Ribosomal back-translocase LepA</fullName>
    </alternativeName>
</protein>
<accession>Q8ZD74</accession>
<accession>Q0WDH5</accession>